<keyword id="KW-0175">Coiled coil</keyword>
<keyword id="KW-0238">DNA-binding</keyword>
<keyword id="KW-1185">Reference proteome</keyword>
<keyword id="KW-0804">Transcription</keyword>
<keyword id="KW-0805">Transcription regulation</keyword>
<protein>
    <recommendedName>
        <fullName evidence="1">Transcription elongation factor GreA</fullName>
    </recommendedName>
    <alternativeName>
        <fullName evidence="1">Transcript cleavage factor GreA</fullName>
    </alternativeName>
</protein>
<dbReference type="EMBL" id="AE005176">
    <property type="protein sequence ID" value="AAK04734.1"/>
    <property type="molecule type" value="Genomic_DNA"/>
</dbReference>
<dbReference type="PIR" id="D86704">
    <property type="entry name" value="D86704"/>
</dbReference>
<dbReference type="RefSeq" id="NP_266792.1">
    <property type="nucleotide sequence ID" value="NC_002662.1"/>
</dbReference>
<dbReference type="SMR" id="Q9CHT2"/>
<dbReference type="PaxDb" id="272623-L0140"/>
<dbReference type="EnsemblBacteria" id="AAK04734">
    <property type="protein sequence ID" value="AAK04734"/>
    <property type="gene ID" value="L0140"/>
</dbReference>
<dbReference type="KEGG" id="lla:L0140"/>
<dbReference type="PATRIC" id="fig|272623.7.peg.680"/>
<dbReference type="eggNOG" id="COG0782">
    <property type="taxonomic scope" value="Bacteria"/>
</dbReference>
<dbReference type="HOGENOM" id="CLU_101379_2_1_9"/>
<dbReference type="OrthoDB" id="9808774at2"/>
<dbReference type="Proteomes" id="UP000002196">
    <property type="component" value="Chromosome"/>
</dbReference>
<dbReference type="GO" id="GO:0003677">
    <property type="term" value="F:DNA binding"/>
    <property type="evidence" value="ECO:0007669"/>
    <property type="project" value="UniProtKB-UniRule"/>
</dbReference>
<dbReference type="GO" id="GO:0070063">
    <property type="term" value="F:RNA polymerase binding"/>
    <property type="evidence" value="ECO:0007669"/>
    <property type="project" value="InterPro"/>
</dbReference>
<dbReference type="GO" id="GO:0006354">
    <property type="term" value="P:DNA-templated transcription elongation"/>
    <property type="evidence" value="ECO:0007669"/>
    <property type="project" value="TreeGrafter"/>
</dbReference>
<dbReference type="GO" id="GO:0032784">
    <property type="term" value="P:regulation of DNA-templated transcription elongation"/>
    <property type="evidence" value="ECO:0007669"/>
    <property type="project" value="UniProtKB-UniRule"/>
</dbReference>
<dbReference type="FunFam" id="1.10.287.180:FF:000001">
    <property type="entry name" value="Transcription elongation factor GreA"/>
    <property type="match status" value="1"/>
</dbReference>
<dbReference type="FunFam" id="3.10.50.30:FF:000001">
    <property type="entry name" value="Transcription elongation factor GreA"/>
    <property type="match status" value="1"/>
</dbReference>
<dbReference type="Gene3D" id="3.10.50.30">
    <property type="entry name" value="Transcription elongation factor, GreA/GreB, C-terminal domain"/>
    <property type="match status" value="1"/>
</dbReference>
<dbReference type="Gene3D" id="1.10.287.180">
    <property type="entry name" value="Transcription elongation factor, GreA/GreB, N-terminal domain"/>
    <property type="match status" value="1"/>
</dbReference>
<dbReference type="HAMAP" id="MF_00105">
    <property type="entry name" value="GreA_GreB"/>
    <property type="match status" value="1"/>
</dbReference>
<dbReference type="InterPro" id="IPR036953">
    <property type="entry name" value="GreA/GreB_C_sf"/>
</dbReference>
<dbReference type="InterPro" id="IPR018151">
    <property type="entry name" value="TF_GreA/GreB_CS"/>
</dbReference>
<dbReference type="InterPro" id="IPR006359">
    <property type="entry name" value="Tscrpt_elong_fac_GreA"/>
</dbReference>
<dbReference type="InterPro" id="IPR028624">
    <property type="entry name" value="Tscrpt_elong_fac_GreA/B"/>
</dbReference>
<dbReference type="InterPro" id="IPR001437">
    <property type="entry name" value="Tscrpt_elong_fac_GreA/B_C"/>
</dbReference>
<dbReference type="InterPro" id="IPR023459">
    <property type="entry name" value="Tscrpt_elong_fac_GreA/B_fam"/>
</dbReference>
<dbReference type="InterPro" id="IPR022691">
    <property type="entry name" value="Tscrpt_elong_fac_GreA/B_N"/>
</dbReference>
<dbReference type="InterPro" id="IPR036805">
    <property type="entry name" value="Tscrpt_elong_fac_GreA/B_N_sf"/>
</dbReference>
<dbReference type="NCBIfam" id="TIGR01462">
    <property type="entry name" value="greA"/>
    <property type="match status" value="1"/>
</dbReference>
<dbReference type="NCBIfam" id="NF001260">
    <property type="entry name" value="PRK00226.1-1"/>
    <property type="match status" value="1"/>
</dbReference>
<dbReference type="NCBIfam" id="NF001261">
    <property type="entry name" value="PRK00226.1-2"/>
    <property type="match status" value="1"/>
</dbReference>
<dbReference type="NCBIfam" id="NF001263">
    <property type="entry name" value="PRK00226.1-4"/>
    <property type="match status" value="1"/>
</dbReference>
<dbReference type="PANTHER" id="PTHR30437">
    <property type="entry name" value="TRANSCRIPTION ELONGATION FACTOR GREA"/>
    <property type="match status" value="1"/>
</dbReference>
<dbReference type="PANTHER" id="PTHR30437:SF4">
    <property type="entry name" value="TRANSCRIPTION ELONGATION FACTOR GREA"/>
    <property type="match status" value="1"/>
</dbReference>
<dbReference type="Pfam" id="PF01272">
    <property type="entry name" value="GreA_GreB"/>
    <property type="match status" value="1"/>
</dbReference>
<dbReference type="Pfam" id="PF03449">
    <property type="entry name" value="GreA_GreB_N"/>
    <property type="match status" value="1"/>
</dbReference>
<dbReference type="PIRSF" id="PIRSF006092">
    <property type="entry name" value="GreA_GreB"/>
    <property type="match status" value="1"/>
</dbReference>
<dbReference type="SUPFAM" id="SSF54534">
    <property type="entry name" value="FKBP-like"/>
    <property type="match status" value="1"/>
</dbReference>
<dbReference type="SUPFAM" id="SSF46557">
    <property type="entry name" value="GreA transcript cleavage protein, N-terminal domain"/>
    <property type="match status" value="1"/>
</dbReference>
<dbReference type="PROSITE" id="PS00829">
    <property type="entry name" value="GREAB_1"/>
    <property type="match status" value="1"/>
</dbReference>
<feature type="chain" id="PRO_0000176933" description="Transcription elongation factor GreA">
    <location>
        <begin position="1"/>
        <end position="156"/>
    </location>
</feature>
<feature type="coiled-coil region" evidence="1">
    <location>
        <begin position="7"/>
        <end position="27"/>
    </location>
</feature>
<sequence>MEKTFPMTQEGLDKLKLELENLKLVKRPEVIDRIKVARSYGDLSENSEYEAAKDEQAFIEGRISTVETMIRYAEIVDNAKIAKDEVALGKNVTFVEVGETDEESYQIVGTAEADPFSGKISNESPIARVLIGKKVGDIVNVPLPVGEMTVKIVKVD</sequence>
<reference key="1">
    <citation type="journal article" date="2001" name="Genome Res.">
        <title>The complete genome sequence of the lactic acid bacterium Lactococcus lactis ssp. lactis IL1403.</title>
        <authorList>
            <person name="Bolotin A."/>
            <person name="Wincker P."/>
            <person name="Mauger S."/>
            <person name="Jaillon O."/>
            <person name="Malarme K."/>
            <person name="Weissenbach J."/>
            <person name="Ehrlich S.D."/>
            <person name="Sorokin A."/>
        </authorList>
    </citation>
    <scope>NUCLEOTIDE SEQUENCE [LARGE SCALE GENOMIC DNA]</scope>
    <source>
        <strain>IL1403</strain>
    </source>
</reference>
<proteinExistence type="inferred from homology"/>
<gene>
    <name evidence="1" type="primary">greA</name>
    <name type="ordered locus">LL0636</name>
    <name type="ORF">L0140</name>
</gene>
<name>GREA_LACLA</name>
<evidence type="ECO:0000255" key="1">
    <source>
        <dbReference type="HAMAP-Rule" id="MF_00105"/>
    </source>
</evidence>
<organism>
    <name type="scientific">Lactococcus lactis subsp. lactis (strain IL1403)</name>
    <name type="common">Streptococcus lactis</name>
    <dbReference type="NCBI Taxonomy" id="272623"/>
    <lineage>
        <taxon>Bacteria</taxon>
        <taxon>Bacillati</taxon>
        <taxon>Bacillota</taxon>
        <taxon>Bacilli</taxon>
        <taxon>Lactobacillales</taxon>
        <taxon>Streptococcaceae</taxon>
        <taxon>Lactococcus</taxon>
    </lineage>
</organism>
<accession>Q9CHT2</accession>
<comment type="function">
    <text evidence="1">Necessary for efficient RNA polymerase transcription elongation past template-encoded arresting sites. The arresting sites in DNA have the property of trapping a certain fraction of elongating RNA polymerases that pass through, resulting in locked ternary complexes. Cleavage of the nascent transcript by cleavage factors such as GreA or GreB allows the resumption of elongation from the new 3'terminus. GreA releases sequences of 2 to 3 nucleotides.</text>
</comment>
<comment type="similarity">
    <text evidence="1">Belongs to the GreA/GreB family.</text>
</comment>